<feature type="chain" id="PRO_0000144763" description="Claudin-11">
    <location>
        <begin position="1"/>
        <end position="200"/>
    </location>
</feature>
<feature type="topological domain" description="Cytoplasmic" evidence="3">
    <location>
        <position position="1"/>
    </location>
</feature>
<feature type="transmembrane region" description="Helical" evidence="3">
    <location>
        <begin position="2"/>
        <end position="22"/>
    </location>
</feature>
<feature type="topological domain" description="Extracellular" evidence="3">
    <location>
        <begin position="23"/>
        <end position="75"/>
    </location>
</feature>
<feature type="transmembrane region" description="Helical" evidence="3">
    <location>
        <begin position="76"/>
        <end position="96"/>
    </location>
</feature>
<feature type="topological domain" description="Cytoplasmic" evidence="3">
    <location>
        <begin position="97"/>
        <end position="115"/>
    </location>
</feature>
<feature type="transmembrane region" description="Helical" evidence="3">
    <location>
        <begin position="116"/>
        <end position="136"/>
    </location>
</feature>
<feature type="topological domain" description="Extracellular" evidence="3">
    <location>
        <begin position="137"/>
        <end position="150"/>
    </location>
</feature>
<feature type="transmembrane region" description="Helical" evidence="3">
    <location>
        <begin position="151"/>
        <end position="171"/>
    </location>
</feature>
<feature type="topological domain" description="Cytoplasmic" evidence="3">
    <location>
        <begin position="172"/>
        <end position="200"/>
    </location>
</feature>
<feature type="modified residue" description="Phosphoserine" evidence="2">
    <location>
        <position position="190"/>
    </location>
</feature>
<feature type="modified residue" description="Phosphoserine" evidence="2">
    <location>
        <position position="191"/>
    </location>
</feature>
<accession>Q5REK8</accession>
<reference key="1">
    <citation type="submission" date="2004-11" db="EMBL/GenBank/DDBJ databases">
        <authorList>
            <consortium name="The German cDNA consortium"/>
        </authorList>
    </citation>
    <scope>NUCLEOTIDE SEQUENCE [LARGE SCALE MRNA]</scope>
    <source>
        <tissue>Brain cortex</tissue>
    </source>
</reference>
<evidence type="ECO:0000250" key="1">
    <source>
        <dbReference type="UniProtKB" id="O75508"/>
    </source>
</evidence>
<evidence type="ECO:0000250" key="2">
    <source>
        <dbReference type="UniProtKB" id="Q60771"/>
    </source>
</evidence>
<evidence type="ECO:0000255" key="3"/>
<evidence type="ECO:0000305" key="4"/>
<name>CLD11_PONAB</name>
<organism>
    <name type="scientific">Pongo abelii</name>
    <name type="common">Sumatran orangutan</name>
    <name type="synonym">Pongo pygmaeus abelii</name>
    <dbReference type="NCBI Taxonomy" id="9601"/>
    <lineage>
        <taxon>Eukaryota</taxon>
        <taxon>Metazoa</taxon>
        <taxon>Chordata</taxon>
        <taxon>Craniata</taxon>
        <taxon>Vertebrata</taxon>
        <taxon>Euteleostomi</taxon>
        <taxon>Mammalia</taxon>
        <taxon>Eutheria</taxon>
        <taxon>Euarchontoglires</taxon>
        <taxon>Primates</taxon>
        <taxon>Haplorrhini</taxon>
        <taxon>Catarrhini</taxon>
        <taxon>Hominidae</taxon>
        <taxon>Pongo</taxon>
    </lineage>
</organism>
<gene>
    <name type="primary">CLDN11</name>
</gene>
<protein>
    <recommendedName>
        <fullName>Claudin-11</fullName>
    </recommendedName>
</protein>
<comment type="function">
    <text evidence="1">Plays a major role in tight junction-specific obliteration of the intercellular space, through calcium-independent cell-adhesion activity.</text>
</comment>
<comment type="subunit">
    <text evidence="1 2">Interacts with tetraspanin-3/TSPAN3. Interacts with OCLN.</text>
</comment>
<comment type="subcellular location">
    <subcellularLocation>
        <location evidence="1">Cell junction</location>
        <location evidence="1">Tight junction</location>
    </subcellularLocation>
    <subcellularLocation>
        <location evidence="1">Cell membrane</location>
        <topology evidence="3">Multi-pass membrane protein</topology>
    </subcellularLocation>
</comment>
<comment type="similarity">
    <text evidence="4">Belongs to the claudin family.</text>
</comment>
<keyword id="KW-0965">Cell junction</keyword>
<keyword id="KW-1003">Cell membrane</keyword>
<keyword id="KW-0472">Membrane</keyword>
<keyword id="KW-0597">Phosphoprotein</keyword>
<keyword id="KW-1185">Reference proteome</keyword>
<keyword id="KW-0796">Tight junction</keyword>
<keyword id="KW-0812">Transmembrane</keyword>
<keyword id="KW-1133">Transmembrane helix</keyword>
<sequence>MVATCLQVVGFVTSFVGWIGVIVTTSTNDWVVTCGYTIPTCRKLDELGSKGLWADCVMATGLYHCKPLVDILPCRALMIAASVLGLPAILLLLTVLPCIRMGQEPGVAKYRRAQLAGVLLILLALCAIVATIWFPVCAHRETTIVSFGYSLYAGWIGAVLCLVGGCVILCCAGDAQAFGENRFYYTAGSSSPTHAKSAHV</sequence>
<proteinExistence type="evidence at transcript level"/>
<dbReference type="EMBL" id="CR857517">
    <property type="protein sequence ID" value="CAH89799.1"/>
    <property type="molecule type" value="mRNA"/>
</dbReference>
<dbReference type="SMR" id="Q5REK8"/>
<dbReference type="STRING" id="9601.ENSPPYP00000015975"/>
<dbReference type="eggNOG" id="ENOG502QSDJ">
    <property type="taxonomic scope" value="Eukaryota"/>
</dbReference>
<dbReference type="InParanoid" id="Q5REK8"/>
<dbReference type="Proteomes" id="UP000001595">
    <property type="component" value="Unplaced"/>
</dbReference>
<dbReference type="GO" id="GO:0005923">
    <property type="term" value="C:bicellular tight junction"/>
    <property type="evidence" value="ECO:0007669"/>
    <property type="project" value="UniProtKB-SubCell"/>
</dbReference>
<dbReference type="GO" id="GO:0005886">
    <property type="term" value="C:plasma membrane"/>
    <property type="evidence" value="ECO:0007669"/>
    <property type="project" value="UniProtKB-SubCell"/>
</dbReference>
<dbReference type="GO" id="GO:0005198">
    <property type="term" value="F:structural molecule activity"/>
    <property type="evidence" value="ECO:0007669"/>
    <property type="project" value="InterPro"/>
</dbReference>
<dbReference type="Gene3D" id="1.20.140.150">
    <property type="match status" value="1"/>
</dbReference>
<dbReference type="InterPro" id="IPR006187">
    <property type="entry name" value="Claudin"/>
</dbReference>
<dbReference type="InterPro" id="IPR003555">
    <property type="entry name" value="Claudin11"/>
</dbReference>
<dbReference type="InterPro" id="IPR017974">
    <property type="entry name" value="Claudin_CS"/>
</dbReference>
<dbReference type="InterPro" id="IPR004031">
    <property type="entry name" value="PMP22/EMP/MP20/Claudin"/>
</dbReference>
<dbReference type="PANTHER" id="PTHR12002">
    <property type="entry name" value="CLAUDIN"/>
    <property type="match status" value="1"/>
</dbReference>
<dbReference type="Pfam" id="PF00822">
    <property type="entry name" value="PMP22_Claudin"/>
    <property type="match status" value="1"/>
</dbReference>
<dbReference type="PRINTS" id="PR01077">
    <property type="entry name" value="CLAUDIN"/>
</dbReference>
<dbReference type="PRINTS" id="PR01384">
    <property type="entry name" value="CLAUDIN11"/>
</dbReference>
<dbReference type="PROSITE" id="PS01346">
    <property type="entry name" value="CLAUDIN"/>
    <property type="match status" value="1"/>
</dbReference>